<keyword id="KW-0030">Aminoacyl-tRNA synthetase</keyword>
<keyword id="KW-0067">ATP-binding</keyword>
<keyword id="KW-0963">Cytoplasm</keyword>
<keyword id="KW-0436">Ligase</keyword>
<keyword id="KW-0547">Nucleotide-binding</keyword>
<keyword id="KW-0648">Protein biosynthesis</keyword>
<organism>
    <name type="scientific">Bacillus cereus (strain AH187)</name>
    <dbReference type="NCBI Taxonomy" id="405534"/>
    <lineage>
        <taxon>Bacteria</taxon>
        <taxon>Bacillati</taxon>
        <taxon>Bacillota</taxon>
        <taxon>Bacilli</taxon>
        <taxon>Bacillales</taxon>
        <taxon>Bacillaceae</taxon>
        <taxon>Bacillus</taxon>
        <taxon>Bacillus cereus group</taxon>
    </lineage>
</organism>
<reference key="1">
    <citation type="submission" date="2008-10" db="EMBL/GenBank/DDBJ databases">
        <title>Genome sequence of Bacillus cereus AH187.</title>
        <authorList>
            <person name="Dodson R.J."/>
            <person name="Durkin A.S."/>
            <person name="Rosovitz M.J."/>
            <person name="Rasko D.A."/>
            <person name="Kolsto A.B."/>
            <person name="Okstad O.A."/>
            <person name="Ravel J."/>
            <person name="Sutton G."/>
        </authorList>
    </citation>
    <scope>NUCLEOTIDE SEQUENCE [LARGE SCALE GENOMIC DNA]</scope>
    <source>
        <strain>AH187</strain>
    </source>
</reference>
<gene>
    <name evidence="1" type="primary">serS</name>
    <name type="ordered locus">BCAH187_A0018</name>
</gene>
<dbReference type="EC" id="6.1.1.11" evidence="1"/>
<dbReference type="EMBL" id="CP001177">
    <property type="protein sequence ID" value="ACJ82304.1"/>
    <property type="molecule type" value="Genomic_DNA"/>
</dbReference>
<dbReference type="SMR" id="B7HPS8"/>
<dbReference type="KEGG" id="bcr:BCAH187_A0018"/>
<dbReference type="HOGENOM" id="CLU_023797_1_1_9"/>
<dbReference type="UniPathway" id="UPA00906">
    <property type="reaction ID" value="UER00895"/>
</dbReference>
<dbReference type="Proteomes" id="UP000002214">
    <property type="component" value="Chromosome"/>
</dbReference>
<dbReference type="GO" id="GO:0005737">
    <property type="term" value="C:cytoplasm"/>
    <property type="evidence" value="ECO:0007669"/>
    <property type="project" value="UniProtKB-SubCell"/>
</dbReference>
<dbReference type="GO" id="GO:0005524">
    <property type="term" value="F:ATP binding"/>
    <property type="evidence" value="ECO:0007669"/>
    <property type="project" value="UniProtKB-UniRule"/>
</dbReference>
<dbReference type="GO" id="GO:0140096">
    <property type="term" value="F:catalytic activity, acting on a protein"/>
    <property type="evidence" value="ECO:0007669"/>
    <property type="project" value="UniProtKB-ARBA"/>
</dbReference>
<dbReference type="GO" id="GO:0004828">
    <property type="term" value="F:serine-tRNA ligase activity"/>
    <property type="evidence" value="ECO:0007669"/>
    <property type="project" value="UniProtKB-UniRule"/>
</dbReference>
<dbReference type="GO" id="GO:0016740">
    <property type="term" value="F:transferase activity"/>
    <property type="evidence" value="ECO:0007669"/>
    <property type="project" value="UniProtKB-ARBA"/>
</dbReference>
<dbReference type="GO" id="GO:0016260">
    <property type="term" value="P:selenocysteine biosynthetic process"/>
    <property type="evidence" value="ECO:0007669"/>
    <property type="project" value="UniProtKB-UniRule"/>
</dbReference>
<dbReference type="GO" id="GO:0006434">
    <property type="term" value="P:seryl-tRNA aminoacylation"/>
    <property type="evidence" value="ECO:0007669"/>
    <property type="project" value="UniProtKB-UniRule"/>
</dbReference>
<dbReference type="CDD" id="cd00770">
    <property type="entry name" value="SerRS_core"/>
    <property type="match status" value="1"/>
</dbReference>
<dbReference type="Gene3D" id="3.30.930.10">
    <property type="entry name" value="Bira Bifunctional Protein, Domain 2"/>
    <property type="match status" value="1"/>
</dbReference>
<dbReference type="Gene3D" id="1.10.287.40">
    <property type="entry name" value="Serine-tRNA synthetase, tRNA binding domain"/>
    <property type="match status" value="1"/>
</dbReference>
<dbReference type="HAMAP" id="MF_00176">
    <property type="entry name" value="Ser_tRNA_synth_type1"/>
    <property type="match status" value="1"/>
</dbReference>
<dbReference type="InterPro" id="IPR002314">
    <property type="entry name" value="aa-tRNA-synt_IIb"/>
</dbReference>
<dbReference type="InterPro" id="IPR006195">
    <property type="entry name" value="aa-tRNA-synth_II"/>
</dbReference>
<dbReference type="InterPro" id="IPR045864">
    <property type="entry name" value="aa-tRNA-synth_II/BPL/LPL"/>
</dbReference>
<dbReference type="InterPro" id="IPR002317">
    <property type="entry name" value="Ser-tRNA-ligase_type_1"/>
</dbReference>
<dbReference type="InterPro" id="IPR015866">
    <property type="entry name" value="Ser-tRNA-synth_1_N"/>
</dbReference>
<dbReference type="InterPro" id="IPR042103">
    <property type="entry name" value="SerRS_1_N_sf"/>
</dbReference>
<dbReference type="InterPro" id="IPR033729">
    <property type="entry name" value="SerRS_core"/>
</dbReference>
<dbReference type="InterPro" id="IPR010978">
    <property type="entry name" value="tRNA-bd_arm"/>
</dbReference>
<dbReference type="NCBIfam" id="TIGR00414">
    <property type="entry name" value="serS"/>
    <property type="match status" value="1"/>
</dbReference>
<dbReference type="PANTHER" id="PTHR43697:SF1">
    <property type="entry name" value="SERINE--TRNA LIGASE"/>
    <property type="match status" value="1"/>
</dbReference>
<dbReference type="PANTHER" id="PTHR43697">
    <property type="entry name" value="SERYL-TRNA SYNTHETASE"/>
    <property type="match status" value="1"/>
</dbReference>
<dbReference type="Pfam" id="PF02403">
    <property type="entry name" value="Seryl_tRNA_N"/>
    <property type="match status" value="1"/>
</dbReference>
<dbReference type="Pfam" id="PF00587">
    <property type="entry name" value="tRNA-synt_2b"/>
    <property type="match status" value="1"/>
</dbReference>
<dbReference type="PIRSF" id="PIRSF001529">
    <property type="entry name" value="Ser-tRNA-synth_IIa"/>
    <property type="match status" value="1"/>
</dbReference>
<dbReference type="PRINTS" id="PR00981">
    <property type="entry name" value="TRNASYNTHSER"/>
</dbReference>
<dbReference type="SUPFAM" id="SSF55681">
    <property type="entry name" value="Class II aaRS and biotin synthetases"/>
    <property type="match status" value="1"/>
</dbReference>
<dbReference type="SUPFAM" id="SSF46589">
    <property type="entry name" value="tRNA-binding arm"/>
    <property type="match status" value="1"/>
</dbReference>
<dbReference type="PROSITE" id="PS50862">
    <property type="entry name" value="AA_TRNA_LIGASE_II"/>
    <property type="match status" value="1"/>
</dbReference>
<comment type="function">
    <text evidence="1">Catalyzes the attachment of serine to tRNA(Ser). Is also able to aminoacylate tRNA(Sec) with serine, to form the misacylated tRNA L-seryl-tRNA(Sec), which will be further converted into selenocysteinyl-tRNA(Sec).</text>
</comment>
<comment type="catalytic activity">
    <reaction evidence="1">
        <text>tRNA(Ser) + L-serine + ATP = L-seryl-tRNA(Ser) + AMP + diphosphate + H(+)</text>
        <dbReference type="Rhea" id="RHEA:12292"/>
        <dbReference type="Rhea" id="RHEA-COMP:9669"/>
        <dbReference type="Rhea" id="RHEA-COMP:9703"/>
        <dbReference type="ChEBI" id="CHEBI:15378"/>
        <dbReference type="ChEBI" id="CHEBI:30616"/>
        <dbReference type="ChEBI" id="CHEBI:33019"/>
        <dbReference type="ChEBI" id="CHEBI:33384"/>
        <dbReference type="ChEBI" id="CHEBI:78442"/>
        <dbReference type="ChEBI" id="CHEBI:78533"/>
        <dbReference type="ChEBI" id="CHEBI:456215"/>
        <dbReference type="EC" id="6.1.1.11"/>
    </reaction>
</comment>
<comment type="catalytic activity">
    <reaction evidence="1">
        <text>tRNA(Sec) + L-serine + ATP = L-seryl-tRNA(Sec) + AMP + diphosphate + H(+)</text>
        <dbReference type="Rhea" id="RHEA:42580"/>
        <dbReference type="Rhea" id="RHEA-COMP:9742"/>
        <dbReference type="Rhea" id="RHEA-COMP:10128"/>
        <dbReference type="ChEBI" id="CHEBI:15378"/>
        <dbReference type="ChEBI" id="CHEBI:30616"/>
        <dbReference type="ChEBI" id="CHEBI:33019"/>
        <dbReference type="ChEBI" id="CHEBI:33384"/>
        <dbReference type="ChEBI" id="CHEBI:78442"/>
        <dbReference type="ChEBI" id="CHEBI:78533"/>
        <dbReference type="ChEBI" id="CHEBI:456215"/>
        <dbReference type="EC" id="6.1.1.11"/>
    </reaction>
</comment>
<comment type="pathway">
    <text evidence="1">Aminoacyl-tRNA biosynthesis; selenocysteinyl-tRNA(Sec) biosynthesis; L-seryl-tRNA(Sec) from L-serine and tRNA(Sec): step 1/1.</text>
</comment>
<comment type="subunit">
    <text evidence="1">Homodimer. The tRNA molecule binds across the dimer.</text>
</comment>
<comment type="subcellular location">
    <subcellularLocation>
        <location evidence="1">Cytoplasm</location>
    </subcellularLocation>
</comment>
<comment type="domain">
    <text evidence="1">Consists of two distinct domains, a catalytic core and a N-terminal extension that is involved in tRNA binding.</text>
</comment>
<comment type="similarity">
    <text evidence="1">Belongs to the class-II aminoacyl-tRNA synthetase family. Type-1 seryl-tRNA synthetase subfamily.</text>
</comment>
<evidence type="ECO:0000255" key="1">
    <source>
        <dbReference type="HAMAP-Rule" id="MF_00176"/>
    </source>
</evidence>
<accession>B7HPS8</accession>
<name>SYS_BACC7</name>
<protein>
    <recommendedName>
        <fullName evidence="1">Serine--tRNA ligase</fullName>
        <ecNumber evidence="1">6.1.1.11</ecNumber>
    </recommendedName>
    <alternativeName>
        <fullName evidence="1">Seryl-tRNA synthetase</fullName>
        <shortName evidence="1">SerRS</shortName>
    </alternativeName>
    <alternativeName>
        <fullName evidence="1">Seryl-tRNA(Ser/Sec) synthetase</fullName>
    </alternativeName>
</protein>
<proteinExistence type="inferred from homology"/>
<sequence length="424" mass="48730">MLDIKFLRTNFEEVKAKLQHRGEDLTDFGRFEELDTRRRELLVQTEELKSKRNEVSQQISVLKREKKDAEALILEMREVGEKVKDLDNELRTVEEDLERLMLSIPNIPHESAPVGETEDDNVVARTWGEVKEFAFEPKPHWDLATDLGILDFERAGKVTGSRFVFYKGAGARLERALISFMLDLHTDEHGYEEVLPPYMVNRASMTGTGQLPKFEEDAFRIESEDYFLIPTAEVPVTNMHRDEILNKDQLPIRYAAFSSCFRSEAGSAGRDTRGLIRQHQFNKVELVKFVKPEDSYEELEKLTNDAERVLQLLELPYRVMSMCTGDLGFTAAKKYDIEVWIPSYGTYREISSCSNFEAFQARRANIRFRREPNGKPEHVHTLNGSGLAIGRTVAAILENYQQEDGTIIIPEVLRPYMGGKTVIK</sequence>
<feature type="chain" id="PRO_1000199463" description="Serine--tRNA ligase">
    <location>
        <begin position="1"/>
        <end position="424"/>
    </location>
</feature>
<feature type="binding site" evidence="1">
    <location>
        <begin position="231"/>
        <end position="233"/>
    </location>
    <ligand>
        <name>L-serine</name>
        <dbReference type="ChEBI" id="CHEBI:33384"/>
    </ligand>
</feature>
<feature type="binding site" evidence="1">
    <location>
        <begin position="262"/>
        <end position="264"/>
    </location>
    <ligand>
        <name>ATP</name>
        <dbReference type="ChEBI" id="CHEBI:30616"/>
    </ligand>
</feature>
<feature type="binding site" evidence="1">
    <location>
        <position position="285"/>
    </location>
    <ligand>
        <name>L-serine</name>
        <dbReference type="ChEBI" id="CHEBI:33384"/>
    </ligand>
</feature>
<feature type="binding site" evidence="1">
    <location>
        <begin position="349"/>
        <end position="352"/>
    </location>
    <ligand>
        <name>ATP</name>
        <dbReference type="ChEBI" id="CHEBI:30616"/>
    </ligand>
</feature>
<feature type="binding site" evidence="1">
    <location>
        <position position="385"/>
    </location>
    <ligand>
        <name>L-serine</name>
        <dbReference type="ChEBI" id="CHEBI:33384"/>
    </ligand>
</feature>